<sequence>MIVFPAIDLMNGVCVRLRRGRADDETVFSSDPVATARHWQEQGGRWLHVVDLDGAFSGQPVNAPLIRSICDALDIPVQLGGGIRDAATAKAYLEAGVERLIIGTIALEEPDAYAALCAEFPGRIGVSLDAEGGKLKTKGWVADSGLTVDEVLPRLLEAGTAFIIYTDIDRDGMQTGVNLPALEHLAKASTVPVIAAGGVATLEDVKALYPLSRTTNLQGAVSGRAIYEGTLDLRTAMDWIRQQEKAEAC</sequence>
<comment type="catalytic activity">
    <reaction evidence="1">
        <text>1-(5-phospho-beta-D-ribosyl)-5-[(5-phospho-beta-D-ribosylamino)methylideneamino]imidazole-4-carboxamide = 5-[(5-phospho-1-deoxy-D-ribulos-1-ylimino)methylamino]-1-(5-phospho-beta-D-ribosyl)imidazole-4-carboxamide</text>
        <dbReference type="Rhea" id="RHEA:15469"/>
        <dbReference type="ChEBI" id="CHEBI:58435"/>
        <dbReference type="ChEBI" id="CHEBI:58525"/>
        <dbReference type="EC" id="5.3.1.16"/>
    </reaction>
</comment>
<comment type="pathway">
    <text evidence="1">Amino-acid biosynthesis; L-histidine biosynthesis; L-histidine from 5-phospho-alpha-D-ribose 1-diphosphate: step 4/9.</text>
</comment>
<comment type="subcellular location">
    <subcellularLocation>
        <location evidence="1">Cytoplasm</location>
    </subcellularLocation>
</comment>
<comment type="similarity">
    <text evidence="1">Belongs to the HisA/HisF family.</text>
</comment>
<gene>
    <name evidence="1" type="primary">hisA</name>
    <name type="ordered locus">Dvul_1955</name>
</gene>
<reference key="1">
    <citation type="journal article" date="2009" name="Environ. Microbiol.">
        <title>Contribution of mobile genetic elements to Desulfovibrio vulgaris genome plasticity.</title>
        <authorList>
            <person name="Walker C.B."/>
            <person name="Stolyar S."/>
            <person name="Chivian D."/>
            <person name="Pinel N."/>
            <person name="Gabster J.A."/>
            <person name="Dehal P.S."/>
            <person name="He Z."/>
            <person name="Yang Z.K."/>
            <person name="Yen H.C."/>
            <person name="Zhou J."/>
            <person name="Wall J.D."/>
            <person name="Hazen T.C."/>
            <person name="Arkin A.P."/>
            <person name="Stahl D.A."/>
        </authorList>
    </citation>
    <scope>NUCLEOTIDE SEQUENCE [LARGE SCALE GENOMIC DNA]</scope>
    <source>
        <strain>DP4</strain>
    </source>
</reference>
<evidence type="ECO:0000255" key="1">
    <source>
        <dbReference type="HAMAP-Rule" id="MF_01014"/>
    </source>
</evidence>
<dbReference type="EC" id="5.3.1.16" evidence="1"/>
<dbReference type="EMBL" id="CP000527">
    <property type="protein sequence ID" value="ABM28971.1"/>
    <property type="molecule type" value="Genomic_DNA"/>
</dbReference>
<dbReference type="RefSeq" id="WP_010938337.1">
    <property type="nucleotide sequence ID" value="NC_008751.1"/>
</dbReference>
<dbReference type="SMR" id="A1VEV5"/>
<dbReference type="KEGG" id="dvl:Dvul_1955"/>
<dbReference type="HOGENOM" id="CLU_048577_1_1_7"/>
<dbReference type="UniPathway" id="UPA00031">
    <property type="reaction ID" value="UER00009"/>
</dbReference>
<dbReference type="Proteomes" id="UP000009173">
    <property type="component" value="Chromosome"/>
</dbReference>
<dbReference type="GO" id="GO:0005737">
    <property type="term" value="C:cytoplasm"/>
    <property type="evidence" value="ECO:0007669"/>
    <property type="project" value="UniProtKB-SubCell"/>
</dbReference>
<dbReference type="GO" id="GO:0003949">
    <property type="term" value="F:1-(5-phosphoribosyl)-5-[(5-phosphoribosylamino)methylideneamino]imidazole-4-carboxamide isomerase activity"/>
    <property type="evidence" value="ECO:0007669"/>
    <property type="project" value="UniProtKB-UniRule"/>
</dbReference>
<dbReference type="GO" id="GO:0000105">
    <property type="term" value="P:L-histidine biosynthetic process"/>
    <property type="evidence" value="ECO:0007669"/>
    <property type="project" value="UniProtKB-UniRule"/>
</dbReference>
<dbReference type="GO" id="GO:0000162">
    <property type="term" value="P:L-tryptophan biosynthetic process"/>
    <property type="evidence" value="ECO:0007669"/>
    <property type="project" value="TreeGrafter"/>
</dbReference>
<dbReference type="CDD" id="cd04732">
    <property type="entry name" value="HisA"/>
    <property type="match status" value="1"/>
</dbReference>
<dbReference type="FunFam" id="3.20.20.70:FF:000009">
    <property type="entry name" value="1-(5-phosphoribosyl)-5-[(5-phosphoribosylamino)methylideneamino] imidazole-4-carboxamide isomerase"/>
    <property type="match status" value="1"/>
</dbReference>
<dbReference type="Gene3D" id="3.20.20.70">
    <property type="entry name" value="Aldolase class I"/>
    <property type="match status" value="1"/>
</dbReference>
<dbReference type="HAMAP" id="MF_01014">
    <property type="entry name" value="HisA"/>
    <property type="match status" value="1"/>
</dbReference>
<dbReference type="InterPro" id="IPR013785">
    <property type="entry name" value="Aldolase_TIM"/>
</dbReference>
<dbReference type="InterPro" id="IPR006062">
    <property type="entry name" value="His_biosynth"/>
</dbReference>
<dbReference type="InterPro" id="IPR006063">
    <property type="entry name" value="HisA_bact_arch"/>
</dbReference>
<dbReference type="InterPro" id="IPR044524">
    <property type="entry name" value="Isoase_HisA-like"/>
</dbReference>
<dbReference type="InterPro" id="IPR023016">
    <property type="entry name" value="Isoase_HisA-like_bact"/>
</dbReference>
<dbReference type="InterPro" id="IPR011060">
    <property type="entry name" value="RibuloseP-bd_barrel"/>
</dbReference>
<dbReference type="NCBIfam" id="TIGR00007">
    <property type="entry name" value="1-(5-phosphoribosyl)-5-[(5-phosphoribosylamino)methylideneamino]imidazole-4-carboxamide isomerase"/>
    <property type="match status" value="1"/>
</dbReference>
<dbReference type="PANTHER" id="PTHR43090">
    <property type="entry name" value="1-(5-PHOSPHORIBOSYL)-5-[(5-PHOSPHORIBOSYLAMINO)METHYLIDENEAMINO] IMIDAZOLE-4-CARBOXAMIDE ISOMERASE"/>
    <property type="match status" value="1"/>
</dbReference>
<dbReference type="PANTHER" id="PTHR43090:SF2">
    <property type="entry name" value="1-(5-PHOSPHORIBOSYL)-5-[(5-PHOSPHORIBOSYLAMINO)METHYLIDENEAMINO] IMIDAZOLE-4-CARBOXAMIDE ISOMERASE"/>
    <property type="match status" value="1"/>
</dbReference>
<dbReference type="Pfam" id="PF00977">
    <property type="entry name" value="His_biosynth"/>
    <property type="match status" value="1"/>
</dbReference>
<dbReference type="SUPFAM" id="SSF51366">
    <property type="entry name" value="Ribulose-phoshate binding barrel"/>
    <property type="match status" value="1"/>
</dbReference>
<accession>A1VEV5</accession>
<name>HIS4_NITV4</name>
<organism>
    <name type="scientific">Nitratidesulfovibrio vulgaris (strain DP4)</name>
    <name type="common">Desulfovibrio vulgaris</name>
    <dbReference type="NCBI Taxonomy" id="391774"/>
    <lineage>
        <taxon>Bacteria</taxon>
        <taxon>Pseudomonadati</taxon>
        <taxon>Thermodesulfobacteriota</taxon>
        <taxon>Desulfovibrionia</taxon>
        <taxon>Desulfovibrionales</taxon>
        <taxon>Desulfovibrionaceae</taxon>
        <taxon>Nitratidesulfovibrio</taxon>
    </lineage>
</organism>
<protein>
    <recommendedName>
        <fullName evidence="1">1-(5-phosphoribosyl)-5-[(5-phosphoribosylamino)methylideneamino] imidazole-4-carboxamide isomerase</fullName>
        <ecNumber evidence="1">5.3.1.16</ecNumber>
    </recommendedName>
    <alternativeName>
        <fullName evidence="1">Phosphoribosylformimino-5-aminoimidazole carboxamide ribotide isomerase</fullName>
    </alternativeName>
</protein>
<proteinExistence type="inferred from homology"/>
<feature type="chain" id="PRO_0000290470" description="1-(5-phosphoribosyl)-5-[(5-phosphoribosylamino)methylideneamino] imidazole-4-carboxamide isomerase">
    <location>
        <begin position="1"/>
        <end position="249"/>
    </location>
</feature>
<feature type="active site" description="Proton acceptor" evidence="1">
    <location>
        <position position="8"/>
    </location>
</feature>
<feature type="active site" description="Proton donor" evidence="1">
    <location>
        <position position="129"/>
    </location>
</feature>
<keyword id="KW-0028">Amino-acid biosynthesis</keyword>
<keyword id="KW-0963">Cytoplasm</keyword>
<keyword id="KW-0368">Histidine biosynthesis</keyword>
<keyword id="KW-0413">Isomerase</keyword>